<accession>B5BKM8</accession>
<feature type="chain" id="PRO_1000145435" description="Peptide methionine sulfoxide reductase MsrA">
    <location>
        <begin position="1"/>
        <end position="212"/>
    </location>
</feature>
<feature type="active site" evidence="1">
    <location>
        <position position="52"/>
    </location>
</feature>
<keyword id="KW-0560">Oxidoreductase</keyword>
<organism>
    <name type="scientific">Salmonella paratyphi A (strain AKU_12601)</name>
    <dbReference type="NCBI Taxonomy" id="554290"/>
    <lineage>
        <taxon>Bacteria</taxon>
        <taxon>Pseudomonadati</taxon>
        <taxon>Pseudomonadota</taxon>
        <taxon>Gammaproteobacteria</taxon>
        <taxon>Enterobacterales</taxon>
        <taxon>Enterobacteriaceae</taxon>
        <taxon>Salmonella</taxon>
    </lineage>
</organism>
<comment type="function">
    <text evidence="1">Has an important function as a repair enzyme for proteins that have been inactivated by oxidation. Catalyzes the reversible oxidation-reduction of methionine sulfoxide in proteins to methionine.</text>
</comment>
<comment type="catalytic activity">
    <reaction evidence="1">
        <text>L-methionyl-[protein] + [thioredoxin]-disulfide + H2O = L-methionyl-(S)-S-oxide-[protein] + [thioredoxin]-dithiol</text>
        <dbReference type="Rhea" id="RHEA:14217"/>
        <dbReference type="Rhea" id="RHEA-COMP:10698"/>
        <dbReference type="Rhea" id="RHEA-COMP:10700"/>
        <dbReference type="Rhea" id="RHEA-COMP:12313"/>
        <dbReference type="Rhea" id="RHEA-COMP:12315"/>
        <dbReference type="ChEBI" id="CHEBI:15377"/>
        <dbReference type="ChEBI" id="CHEBI:16044"/>
        <dbReference type="ChEBI" id="CHEBI:29950"/>
        <dbReference type="ChEBI" id="CHEBI:44120"/>
        <dbReference type="ChEBI" id="CHEBI:50058"/>
        <dbReference type="EC" id="1.8.4.11"/>
    </reaction>
</comment>
<comment type="catalytic activity">
    <reaction evidence="1">
        <text>[thioredoxin]-disulfide + L-methionine + H2O = L-methionine (S)-S-oxide + [thioredoxin]-dithiol</text>
        <dbReference type="Rhea" id="RHEA:19993"/>
        <dbReference type="Rhea" id="RHEA-COMP:10698"/>
        <dbReference type="Rhea" id="RHEA-COMP:10700"/>
        <dbReference type="ChEBI" id="CHEBI:15377"/>
        <dbReference type="ChEBI" id="CHEBI:29950"/>
        <dbReference type="ChEBI" id="CHEBI:50058"/>
        <dbReference type="ChEBI" id="CHEBI:57844"/>
        <dbReference type="ChEBI" id="CHEBI:58772"/>
        <dbReference type="EC" id="1.8.4.11"/>
    </reaction>
</comment>
<comment type="similarity">
    <text evidence="1">Belongs to the MsrA Met sulfoxide reductase family.</text>
</comment>
<reference key="1">
    <citation type="journal article" date="2009" name="BMC Genomics">
        <title>Pseudogene accumulation in the evolutionary histories of Salmonella enterica serovars Paratyphi A and Typhi.</title>
        <authorList>
            <person name="Holt K.E."/>
            <person name="Thomson N.R."/>
            <person name="Wain J."/>
            <person name="Langridge G.C."/>
            <person name="Hasan R."/>
            <person name="Bhutta Z.A."/>
            <person name="Quail M.A."/>
            <person name="Norbertczak H."/>
            <person name="Walker D."/>
            <person name="Simmonds M."/>
            <person name="White B."/>
            <person name="Bason N."/>
            <person name="Mungall K."/>
            <person name="Dougan G."/>
            <person name="Parkhill J."/>
        </authorList>
    </citation>
    <scope>NUCLEOTIDE SEQUENCE [LARGE SCALE GENOMIC DNA]</scope>
    <source>
        <strain>AKU_12601</strain>
    </source>
</reference>
<protein>
    <recommendedName>
        <fullName evidence="1">Peptide methionine sulfoxide reductase MsrA</fullName>
        <shortName evidence="1">Protein-methionine-S-oxide reductase</shortName>
        <ecNumber evidence="1">1.8.4.11</ecNumber>
    </recommendedName>
    <alternativeName>
        <fullName evidence="1">Peptide-methionine (S)-S-oxide reductase</fullName>
        <shortName evidence="1">Peptide Met(O) reductase</shortName>
    </alternativeName>
</protein>
<name>MSRA_SALPK</name>
<dbReference type="EC" id="1.8.4.11" evidence="1"/>
<dbReference type="EMBL" id="FM200053">
    <property type="protein sequence ID" value="CAR62214.1"/>
    <property type="molecule type" value="Genomic_DNA"/>
</dbReference>
<dbReference type="RefSeq" id="WP_000051467.1">
    <property type="nucleotide sequence ID" value="NC_011147.1"/>
</dbReference>
<dbReference type="SMR" id="B5BKM8"/>
<dbReference type="KEGG" id="sek:SSPA3927"/>
<dbReference type="HOGENOM" id="CLU_031040_10_3_6"/>
<dbReference type="Proteomes" id="UP000001869">
    <property type="component" value="Chromosome"/>
</dbReference>
<dbReference type="GO" id="GO:0005737">
    <property type="term" value="C:cytoplasm"/>
    <property type="evidence" value="ECO:0007669"/>
    <property type="project" value="TreeGrafter"/>
</dbReference>
<dbReference type="GO" id="GO:0036456">
    <property type="term" value="F:L-methionine-(S)-S-oxide reductase activity"/>
    <property type="evidence" value="ECO:0007669"/>
    <property type="project" value="TreeGrafter"/>
</dbReference>
<dbReference type="GO" id="GO:0008113">
    <property type="term" value="F:peptide-methionine (S)-S-oxide reductase activity"/>
    <property type="evidence" value="ECO:0007669"/>
    <property type="project" value="UniProtKB-UniRule"/>
</dbReference>
<dbReference type="GO" id="GO:0034599">
    <property type="term" value="P:cellular response to oxidative stress"/>
    <property type="evidence" value="ECO:0007669"/>
    <property type="project" value="TreeGrafter"/>
</dbReference>
<dbReference type="GO" id="GO:0036211">
    <property type="term" value="P:protein modification process"/>
    <property type="evidence" value="ECO:0007669"/>
    <property type="project" value="UniProtKB-UniRule"/>
</dbReference>
<dbReference type="FunFam" id="3.30.1060.10:FF:000001">
    <property type="entry name" value="Peptide methionine sulfoxide reductase MsrA"/>
    <property type="match status" value="1"/>
</dbReference>
<dbReference type="Gene3D" id="3.30.1060.10">
    <property type="entry name" value="Peptide methionine sulphoxide reductase MsrA"/>
    <property type="match status" value="1"/>
</dbReference>
<dbReference type="HAMAP" id="MF_01401">
    <property type="entry name" value="MsrA"/>
    <property type="match status" value="1"/>
</dbReference>
<dbReference type="InterPro" id="IPR002569">
    <property type="entry name" value="Met_Sox_Rdtase_MsrA_dom"/>
</dbReference>
<dbReference type="InterPro" id="IPR036509">
    <property type="entry name" value="Met_Sox_Rdtase_MsrA_sf"/>
</dbReference>
<dbReference type="InterPro" id="IPR050162">
    <property type="entry name" value="MsrA_MetSO_reductase"/>
</dbReference>
<dbReference type="NCBIfam" id="TIGR00401">
    <property type="entry name" value="msrA"/>
    <property type="match status" value="1"/>
</dbReference>
<dbReference type="PANTHER" id="PTHR42799">
    <property type="entry name" value="MITOCHONDRIAL PEPTIDE METHIONINE SULFOXIDE REDUCTASE"/>
    <property type="match status" value="1"/>
</dbReference>
<dbReference type="PANTHER" id="PTHR42799:SF2">
    <property type="entry name" value="MITOCHONDRIAL PEPTIDE METHIONINE SULFOXIDE REDUCTASE"/>
    <property type="match status" value="1"/>
</dbReference>
<dbReference type="Pfam" id="PF01625">
    <property type="entry name" value="PMSR"/>
    <property type="match status" value="1"/>
</dbReference>
<dbReference type="SUPFAM" id="SSF55068">
    <property type="entry name" value="Peptide methionine sulfoxide reductase"/>
    <property type="match status" value="1"/>
</dbReference>
<proteinExistence type="inferred from homology"/>
<sequence length="212" mass="23436">MSLFDKKHLVTQADALPGRNTPMPIATLHAVNEHSMTNVPAGMEIAYFAMGCFWGVERLFWQLPGVYSTAAGYAGGYTPNPTYREVCSGQTGHAEAVRIVYDPAVIRYEQLLQTFWENHDPTQGMQQGNDHGTQYRSAIYPLTPEQNAAAHASRERFQSAMAAAGDHRPITTEIAHATPFYYAEDEHQQYLHKNPYGYCGIGGIGVCLPPDA</sequence>
<gene>
    <name evidence="1" type="primary">msrA</name>
    <name type="ordered locus">SSPA3927</name>
</gene>
<evidence type="ECO:0000255" key="1">
    <source>
        <dbReference type="HAMAP-Rule" id="MF_01401"/>
    </source>
</evidence>